<proteinExistence type="evidence at transcript level"/>
<evidence type="ECO:0000250" key="1">
    <source>
        <dbReference type="UniProtKB" id="P21728"/>
    </source>
</evidence>
<evidence type="ECO:0000255" key="2"/>
<evidence type="ECO:0000255" key="3">
    <source>
        <dbReference type="PROSITE-ProRule" id="PRU00521"/>
    </source>
</evidence>
<evidence type="ECO:0000256" key="4">
    <source>
        <dbReference type="SAM" id="MobiDB-lite"/>
    </source>
</evidence>
<sequence length="386" mass="42732">MEIFTTTRGTSAGPEPAPGGHGGTDSPRTSDLSLRALTGCVLCILIVSTLLGNALVCAAVIKFRHLRSKVTNAFVISLAVSDLFVAVLVMPWRAVSEVAGVWLFGAFCDTWVAFDIMCSTASILHLCIISMDRYWAISSPFRYERRMTPRFGCVMIGVAWTLSVLISFIPVQLNWHARGRERTDPGDCNASLNRTYAISSSLISFYIPVLIMVGTYTRIFRIGRTQIRRISSLERAAPRATRGPALCDEESSLKTSFRRETKVLKTLSVIMGVFVFCWLPFFVLNCMVPFCRLEPAAAPCVSDTTFSVFVWFGWANSSLNPVIYAFNADFRKAFSTILGCSRYCRTSAVEAVDFSNELASYHHDTTLQKEASSRGNSRGGPYQFAL</sequence>
<feature type="chain" id="PRO_0000069383" description="D(1)-like dopamine receptor">
    <location>
        <begin position="1"/>
        <end position="386"/>
    </location>
</feature>
<feature type="topological domain" description="Extracellular" evidence="2">
    <location>
        <begin position="1"/>
        <end position="35"/>
    </location>
</feature>
<feature type="transmembrane region" description="Helical; Name=1" evidence="2">
    <location>
        <begin position="36"/>
        <end position="56"/>
    </location>
</feature>
<feature type="topological domain" description="Cytoplasmic" evidence="2">
    <location>
        <begin position="57"/>
        <end position="72"/>
    </location>
</feature>
<feature type="transmembrane region" description="Helical; Name=2" evidence="2">
    <location>
        <begin position="73"/>
        <end position="92"/>
    </location>
</feature>
<feature type="topological domain" description="Extracellular" evidence="2">
    <location>
        <begin position="93"/>
        <end position="109"/>
    </location>
</feature>
<feature type="transmembrane region" description="Helical; Name=3" evidence="2">
    <location>
        <begin position="110"/>
        <end position="131"/>
    </location>
</feature>
<feature type="topological domain" description="Cytoplasmic" evidence="2">
    <location>
        <begin position="132"/>
        <end position="150"/>
    </location>
</feature>
<feature type="transmembrane region" description="Helical; Name=4" evidence="2">
    <location>
        <begin position="151"/>
        <end position="175"/>
    </location>
</feature>
<feature type="topological domain" description="Extracellular" evidence="2">
    <location>
        <begin position="176"/>
        <end position="195"/>
    </location>
</feature>
<feature type="transmembrane region" description="Helical; Name=5" evidence="2">
    <location>
        <begin position="196"/>
        <end position="220"/>
    </location>
</feature>
<feature type="topological domain" description="Cytoplasmic" evidence="2">
    <location>
        <begin position="221"/>
        <end position="266"/>
    </location>
</feature>
<feature type="transmembrane region" description="Helical; Name=6" evidence="2">
    <location>
        <begin position="267"/>
        <end position="292"/>
    </location>
</feature>
<feature type="topological domain" description="Extracellular" evidence="2">
    <location>
        <begin position="293"/>
        <end position="305"/>
    </location>
</feature>
<feature type="transmembrane region" description="Helical; Name=7" evidence="2">
    <location>
        <begin position="306"/>
        <end position="325"/>
    </location>
</feature>
<feature type="topological domain" description="Cytoplasmic" evidence="2">
    <location>
        <begin position="326"/>
        <end position="386"/>
    </location>
</feature>
<feature type="region of interest" description="Disordered" evidence="4">
    <location>
        <begin position="1"/>
        <end position="28"/>
    </location>
</feature>
<feature type="compositionally biased region" description="Polar residues" evidence="4">
    <location>
        <begin position="1"/>
        <end position="10"/>
    </location>
</feature>
<feature type="glycosylation site" description="N-linked (GlcNAc...) asparagine" evidence="2">
    <location>
        <position position="189"/>
    </location>
</feature>
<feature type="glycosylation site" description="N-linked (GlcNAc...) asparagine" evidence="2">
    <location>
        <position position="193"/>
    </location>
</feature>
<feature type="disulfide bond" evidence="3">
    <location>
        <begin position="108"/>
        <end position="188"/>
    </location>
</feature>
<keyword id="KW-1003">Cell membrane</keyword>
<keyword id="KW-0966">Cell projection</keyword>
<keyword id="KW-1015">Disulfide bond</keyword>
<keyword id="KW-0297">G-protein coupled receptor</keyword>
<keyword id="KW-0325">Glycoprotein</keyword>
<keyword id="KW-0472">Membrane</keyword>
<keyword id="KW-0675">Receptor</keyword>
<keyword id="KW-0807">Transducer</keyword>
<keyword id="KW-0812">Transmembrane</keyword>
<keyword id="KW-1133">Transmembrane helix</keyword>
<name>DRD1L_OREMO</name>
<dbReference type="EMBL" id="X81969">
    <property type="protein sequence ID" value="CAA57494.1"/>
    <property type="molecule type" value="mRNA"/>
</dbReference>
<dbReference type="PIR" id="S72168">
    <property type="entry name" value="S72168"/>
</dbReference>
<dbReference type="SMR" id="P47800"/>
<dbReference type="GO" id="GO:0060170">
    <property type="term" value="C:ciliary membrane"/>
    <property type="evidence" value="ECO:0007669"/>
    <property type="project" value="UniProtKB-SubCell"/>
</dbReference>
<dbReference type="GO" id="GO:0004930">
    <property type="term" value="F:G protein-coupled receptor activity"/>
    <property type="evidence" value="ECO:0007669"/>
    <property type="project" value="UniProtKB-KW"/>
</dbReference>
<dbReference type="GO" id="GO:0071880">
    <property type="term" value="P:adenylate cyclase-activating adrenergic receptor signaling pathway"/>
    <property type="evidence" value="ECO:0007669"/>
    <property type="project" value="TreeGrafter"/>
</dbReference>
<dbReference type="GO" id="GO:0043410">
    <property type="term" value="P:positive regulation of MAPK cascade"/>
    <property type="evidence" value="ECO:0007669"/>
    <property type="project" value="TreeGrafter"/>
</dbReference>
<dbReference type="CDD" id="cd15057">
    <property type="entry name" value="7tmA_D1-like_dopamine_R"/>
    <property type="match status" value="1"/>
</dbReference>
<dbReference type="FunFam" id="1.20.1070.10:FF:000691">
    <property type="entry name" value="Predicted vertebrate-like dopamine D1-like G-protein coupled receptor"/>
    <property type="match status" value="1"/>
</dbReference>
<dbReference type="Gene3D" id="1.20.1070.10">
    <property type="entry name" value="Rhodopsin 7-helix transmembrane proteins"/>
    <property type="match status" value="1"/>
</dbReference>
<dbReference type="InterPro" id="IPR000929">
    <property type="entry name" value="Dopamine_rcpt"/>
</dbReference>
<dbReference type="InterPro" id="IPR000276">
    <property type="entry name" value="GPCR_Rhodpsn"/>
</dbReference>
<dbReference type="InterPro" id="IPR017452">
    <property type="entry name" value="GPCR_Rhodpsn_7TM"/>
</dbReference>
<dbReference type="PANTHER" id="PTHR24248">
    <property type="entry name" value="ADRENERGIC RECEPTOR-RELATED G-PROTEIN COUPLED RECEPTOR"/>
    <property type="match status" value="1"/>
</dbReference>
<dbReference type="PANTHER" id="PTHR24248:SF123">
    <property type="entry name" value="G-PROTEIN COUPLED RECEPTORS FAMILY 1 PROFILE DOMAIN-CONTAINING PROTEIN"/>
    <property type="match status" value="1"/>
</dbReference>
<dbReference type="Pfam" id="PF00001">
    <property type="entry name" value="7tm_1"/>
    <property type="match status" value="1"/>
</dbReference>
<dbReference type="PRINTS" id="PR00242">
    <property type="entry name" value="DOPAMINER"/>
</dbReference>
<dbReference type="PRINTS" id="PR00237">
    <property type="entry name" value="GPCRRHODOPSN"/>
</dbReference>
<dbReference type="SMART" id="SM01381">
    <property type="entry name" value="7TM_GPCR_Srsx"/>
    <property type="match status" value="1"/>
</dbReference>
<dbReference type="SUPFAM" id="SSF81321">
    <property type="entry name" value="Family A G protein-coupled receptor-like"/>
    <property type="match status" value="1"/>
</dbReference>
<dbReference type="PROSITE" id="PS00237">
    <property type="entry name" value="G_PROTEIN_RECEP_F1_1"/>
    <property type="match status" value="1"/>
</dbReference>
<dbReference type="PROSITE" id="PS50262">
    <property type="entry name" value="G_PROTEIN_RECEP_F1_2"/>
    <property type="match status" value="1"/>
</dbReference>
<reference key="1">
    <citation type="journal article" date="1996" name="Biochim. Biophys. Acta">
        <title>Cloning and sequence analysis of a hypothalamic cDNA encoding a D1c dopamine receptor in tilapia.</title>
        <authorList>
            <person name="Lamers A.E."/>
            <person name="Groneveld D."/>
            <person name="de Kleijn D.P.V."/>
            <person name="Ceeraedts F.C.G."/>
            <person name="Leunissen J.A.M."/>
            <person name="Flik G."/>
            <person name="Wendelaar Bonga S.E."/>
            <person name="Martens G.J.M."/>
        </authorList>
    </citation>
    <scope>NUCLEOTIDE SEQUENCE [MRNA]</scope>
</reference>
<accession>P47800</accession>
<organism>
    <name type="scientific">Oreochromis mossambicus</name>
    <name type="common">Mozambique tilapia</name>
    <name type="synonym">Tilapia mossambica</name>
    <dbReference type="NCBI Taxonomy" id="8127"/>
    <lineage>
        <taxon>Eukaryota</taxon>
        <taxon>Metazoa</taxon>
        <taxon>Chordata</taxon>
        <taxon>Craniata</taxon>
        <taxon>Vertebrata</taxon>
        <taxon>Euteleostomi</taxon>
        <taxon>Actinopterygii</taxon>
        <taxon>Neopterygii</taxon>
        <taxon>Teleostei</taxon>
        <taxon>Neoteleostei</taxon>
        <taxon>Acanthomorphata</taxon>
        <taxon>Ovalentaria</taxon>
        <taxon>Cichlomorphae</taxon>
        <taxon>Cichliformes</taxon>
        <taxon>Cichlidae</taxon>
        <taxon>African cichlids</taxon>
        <taxon>Pseudocrenilabrinae</taxon>
        <taxon>Oreochromini</taxon>
        <taxon>Oreochromis</taxon>
    </lineage>
</organism>
<protein>
    <recommendedName>
        <fullName>D(1)-like dopamine receptor</fullName>
    </recommendedName>
</protein>
<comment type="function">
    <text>This is one of the five types (D1 to D5) of receptors for dopamine. The activity of this receptor is mediated by G proteins which activate adenylyl cyclase.</text>
</comment>
<comment type="subcellular location">
    <subcellularLocation>
        <location>Cell membrane</location>
        <topology>Multi-pass membrane protein</topology>
    </subcellularLocation>
    <subcellularLocation>
        <location evidence="1">Cell projection</location>
        <location evidence="1">Cilium membrane</location>
        <topology evidence="2">Multi-pass membrane protein</topology>
    </subcellularLocation>
</comment>
<comment type="similarity">
    <text evidence="3">Belongs to the G-protein coupled receptor 1 family.</text>
</comment>